<name>TRI50_MOUSE</name>
<dbReference type="EC" id="2.3.2.27" evidence="9"/>
<dbReference type="EMBL" id="AY081947">
    <property type="protein sequence ID" value="AAL91070.1"/>
    <property type="molecule type" value="mRNA"/>
</dbReference>
<dbReference type="CCDS" id="CCDS19739.1"/>
<dbReference type="RefSeq" id="NP_839971.1">
    <property type="nucleotide sequence ID" value="NM_178240.3"/>
</dbReference>
<dbReference type="RefSeq" id="XP_006504475.1">
    <property type="nucleotide sequence ID" value="XM_006504412.4"/>
</dbReference>
<dbReference type="SMR" id="Q810I2"/>
<dbReference type="BioGRID" id="229593">
    <property type="interactions" value="1"/>
</dbReference>
<dbReference type="FunCoup" id="Q810I2">
    <property type="interactions" value="49"/>
</dbReference>
<dbReference type="STRING" id="10090.ENSMUSP00000066662"/>
<dbReference type="GlyGen" id="Q810I2">
    <property type="glycosylation" value="1 site"/>
</dbReference>
<dbReference type="iPTMnet" id="Q810I2"/>
<dbReference type="PhosphoSitePlus" id="Q810I2"/>
<dbReference type="PaxDb" id="10090-ENSMUSP00000106811"/>
<dbReference type="ProteomicsDB" id="298303"/>
<dbReference type="Antibodypedia" id="14287">
    <property type="antibodies" value="128 antibodies from 19 providers"/>
</dbReference>
<dbReference type="DNASU" id="215061"/>
<dbReference type="Ensembl" id="ENSMUST00000065785.4">
    <property type="protein sequence ID" value="ENSMUSP00000066662.4"/>
    <property type="gene ID" value="ENSMUSG00000053388.11"/>
</dbReference>
<dbReference type="GeneID" id="215061"/>
<dbReference type="KEGG" id="mmu:215061"/>
<dbReference type="UCSC" id="uc008zyf.1">
    <property type="organism name" value="mouse"/>
</dbReference>
<dbReference type="AGR" id="MGI:2664992"/>
<dbReference type="CTD" id="135892"/>
<dbReference type="MGI" id="MGI:2664992">
    <property type="gene designation" value="Trim50"/>
</dbReference>
<dbReference type="VEuPathDB" id="HostDB:ENSMUSG00000053388"/>
<dbReference type="eggNOG" id="KOG2177">
    <property type="taxonomic scope" value="Eukaryota"/>
</dbReference>
<dbReference type="GeneTree" id="ENSGT00940000161467"/>
<dbReference type="HOGENOM" id="CLU_013137_0_3_1"/>
<dbReference type="InParanoid" id="Q810I2"/>
<dbReference type="OrthoDB" id="6105938at2759"/>
<dbReference type="PhylomeDB" id="Q810I2"/>
<dbReference type="Reactome" id="R-MMU-983168">
    <property type="pathway name" value="Antigen processing: Ubiquitination &amp; Proteasome degradation"/>
</dbReference>
<dbReference type="BioGRID-ORCS" id="215061">
    <property type="hits" value="1 hit in 77 CRISPR screens"/>
</dbReference>
<dbReference type="PRO" id="PR:Q810I2"/>
<dbReference type="Proteomes" id="UP000000589">
    <property type="component" value="Chromosome 5"/>
</dbReference>
<dbReference type="RNAct" id="Q810I2">
    <property type="molecule type" value="protein"/>
</dbReference>
<dbReference type="Bgee" id="ENSMUSG00000053388">
    <property type="expression patterns" value="Expressed in stomach and 11 other cell types or tissues"/>
</dbReference>
<dbReference type="ExpressionAtlas" id="Q810I2">
    <property type="expression patterns" value="baseline and differential"/>
</dbReference>
<dbReference type="GO" id="GO:0016235">
    <property type="term" value="C:aggresome"/>
    <property type="evidence" value="ECO:0000314"/>
    <property type="project" value="MGI"/>
</dbReference>
<dbReference type="GO" id="GO:0005737">
    <property type="term" value="C:cytoplasm"/>
    <property type="evidence" value="ECO:0007669"/>
    <property type="project" value="UniProtKB-SubCell"/>
</dbReference>
<dbReference type="GO" id="GO:0016740">
    <property type="term" value="F:transferase activity"/>
    <property type="evidence" value="ECO:0007669"/>
    <property type="project" value="UniProtKB-KW"/>
</dbReference>
<dbReference type="GO" id="GO:0008270">
    <property type="term" value="F:zinc ion binding"/>
    <property type="evidence" value="ECO:0007669"/>
    <property type="project" value="UniProtKB-KW"/>
</dbReference>
<dbReference type="GO" id="GO:0070201">
    <property type="term" value="P:regulation of establishment of protein localization"/>
    <property type="evidence" value="ECO:0000314"/>
    <property type="project" value="MGI"/>
</dbReference>
<dbReference type="CDD" id="cd16605">
    <property type="entry name" value="RING-HC_TRIM50_like_C-IV"/>
    <property type="match status" value="1"/>
</dbReference>
<dbReference type="CDD" id="cd13743">
    <property type="entry name" value="SPRY_PRY_TRIM50"/>
    <property type="match status" value="1"/>
</dbReference>
<dbReference type="FunFam" id="2.60.120.920:FF:000027">
    <property type="entry name" value="E3 ubiquitin-protein ligase TRIM50"/>
    <property type="match status" value="1"/>
</dbReference>
<dbReference type="FunFam" id="3.30.160.60:FF:001490">
    <property type="entry name" value="E3 ubiquitin-protein ligase TRIM50"/>
    <property type="match status" value="1"/>
</dbReference>
<dbReference type="Gene3D" id="2.60.120.920">
    <property type="match status" value="1"/>
</dbReference>
<dbReference type="Gene3D" id="3.30.160.60">
    <property type="entry name" value="Classic Zinc Finger"/>
    <property type="match status" value="1"/>
</dbReference>
<dbReference type="Gene3D" id="3.30.40.10">
    <property type="entry name" value="Zinc/RING finger domain, C3HC4 (zinc finger)"/>
    <property type="match status" value="1"/>
</dbReference>
<dbReference type="InterPro" id="IPR001870">
    <property type="entry name" value="B30.2/SPRY"/>
</dbReference>
<dbReference type="InterPro" id="IPR043136">
    <property type="entry name" value="B30.2/SPRY_sf"/>
</dbReference>
<dbReference type="InterPro" id="IPR003879">
    <property type="entry name" value="Butyrophylin_SPRY"/>
</dbReference>
<dbReference type="InterPro" id="IPR013320">
    <property type="entry name" value="ConA-like_dom_sf"/>
</dbReference>
<dbReference type="InterPro" id="IPR006574">
    <property type="entry name" value="PRY"/>
</dbReference>
<dbReference type="InterPro" id="IPR003877">
    <property type="entry name" value="SPRY_dom"/>
</dbReference>
<dbReference type="InterPro" id="IPR050143">
    <property type="entry name" value="TRIM/RBCC"/>
</dbReference>
<dbReference type="InterPro" id="IPR027370">
    <property type="entry name" value="Znf-RING_euk"/>
</dbReference>
<dbReference type="InterPro" id="IPR000315">
    <property type="entry name" value="Znf_B-box"/>
</dbReference>
<dbReference type="InterPro" id="IPR001841">
    <property type="entry name" value="Znf_RING"/>
</dbReference>
<dbReference type="InterPro" id="IPR013083">
    <property type="entry name" value="Znf_RING/FYVE/PHD"/>
</dbReference>
<dbReference type="InterPro" id="IPR017907">
    <property type="entry name" value="Znf_RING_CS"/>
</dbReference>
<dbReference type="PANTHER" id="PTHR24103">
    <property type="entry name" value="E3 UBIQUITIN-PROTEIN LIGASE TRIM"/>
    <property type="match status" value="1"/>
</dbReference>
<dbReference type="Pfam" id="PF13765">
    <property type="entry name" value="PRY"/>
    <property type="match status" value="1"/>
</dbReference>
<dbReference type="Pfam" id="PF00622">
    <property type="entry name" value="SPRY"/>
    <property type="match status" value="1"/>
</dbReference>
<dbReference type="Pfam" id="PF00643">
    <property type="entry name" value="zf-B_box"/>
    <property type="match status" value="1"/>
</dbReference>
<dbReference type="Pfam" id="PF13445">
    <property type="entry name" value="zf-RING_UBOX"/>
    <property type="match status" value="1"/>
</dbReference>
<dbReference type="PRINTS" id="PR01407">
    <property type="entry name" value="BUTYPHLNCDUF"/>
</dbReference>
<dbReference type="SMART" id="SM00336">
    <property type="entry name" value="BBOX"/>
    <property type="match status" value="1"/>
</dbReference>
<dbReference type="SMART" id="SM00589">
    <property type="entry name" value="PRY"/>
    <property type="match status" value="1"/>
</dbReference>
<dbReference type="SMART" id="SM00184">
    <property type="entry name" value="RING"/>
    <property type="match status" value="1"/>
</dbReference>
<dbReference type="SMART" id="SM00449">
    <property type="entry name" value="SPRY"/>
    <property type="match status" value="1"/>
</dbReference>
<dbReference type="SUPFAM" id="SSF57845">
    <property type="entry name" value="B-box zinc-binding domain"/>
    <property type="match status" value="1"/>
</dbReference>
<dbReference type="SUPFAM" id="SSF49899">
    <property type="entry name" value="Concanavalin A-like lectins/glucanases"/>
    <property type="match status" value="1"/>
</dbReference>
<dbReference type="SUPFAM" id="SSF57850">
    <property type="entry name" value="RING/U-box"/>
    <property type="match status" value="1"/>
</dbReference>
<dbReference type="PROSITE" id="PS50188">
    <property type="entry name" value="B302_SPRY"/>
    <property type="match status" value="1"/>
</dbReference>
<dbReference type="PROSITE" id="PS50119">
    <property type="entry name" value="ZF_BBOX"/>
    <property type="match status" value="1"/>
</dbReference>
<dbReference type="PROSITE" id="PS00518">
    <property type="entry name" value="ZF_RING_1"/>
    <property type="match status" value="1"/>
</dbReference>
<dbReference type="PROSITE" id="PS50089">
    <property type="entry name" value="ZF_RING_2"/>
    <property type="match status" value="1"/>
</dbReference>
<sequence>MAWRLTVPELQDQLQCPICLEVFKEPLMLQCGHSYCKDCLDNLSQHLDSELCCPVCRQSVDCSSSPPNVSLARVIDALRLPGDIEPTVCVHHRNPLSLFCEKDQEFICGLCGLLGSHQHHRVTPVSTVYSRMKEELAGRISELKEEHRNVEEHIGKLVNNRTRIINESDVFSWVIRREFQELHHLVDEEKARCLEGLEGHTRGLVASLDMQLEQAQGTQERLAQAEQVLEQFGNESHHEFIRFHSVASRAEVQQARPLEGVFSPISFKPALHQADIKLTVWKRLFRKVLPAPASLKLDPATAHPLLELSKGNTVVHCGLLAQRRASQPERFDYSTCVLASKGFSWGRHYWEVVVGSKSDWRLGVIKGTASRKGKLNKSPEHGVWLIGLKEGRVYEAFGCPRLPLPVAGHPHRIGVYLHYEQGELTFFDADRPDDLRTLYTFQADFQGKLYPILDTCWHERGSNSLPMVLPPPSGPGHFTLGQV</sequence>
<proteinExistence type="evidence at protein level"/>
<keyword id="KW-0007">Acetylation</keyword>
<keyword id="KW-0175">Coiled coil</keyword>
<keyword id="KW-0963">Cytoplasm</keyword>
<keyword id="KW-0479">Metal-binding</keyword>
<keyword id="KW-1185">Reference proteome</keyword>
<keyword id="KW-0808">Transferase</keyword>
<keyword id="KW-0832">Ubl conjugation</keyword>
<keyword id="KW-0833">Ubl conjugation pathway</keyword>
<keyword id="KW-0862">Zinc</keyword>
<keyword id="KW-0863">Zinc-finger</keyword>
<protein>
    <recommendedName>
        <fullName>E3 ubiquitin-protein ligase TRIM50</fullName>
        <ecNumber evidence="9">2.3.2.27</ecNumber>
    </recommendedName>
    <alternativeName>
        <fullName evidence="11">RING-type E3 ubiquitin transferase TRIM50</fullName>
    </alternativeName>
    <alternativeName>
        <fullName>Tripartite motif-containing protein 50</fullName>
    </alternativeName>
</protein>
<accession>Q810I2</accession>
<feature type="chain" id="PRO_0000056275" description="E3 ubiquitin-protein ligase TRIM50">
    <location>
        <begin position="1"/>
        <end position="483"/>
    </location>
</feature>
<feature type="domain" description="B30.2/SPRY" evidence="5">
    <location>
        <begin position="275"/>
        <end position="474"/>
    </location>
</feature>
<feature type="zinc finger region" description="RING-type" evidence="4">
    <location>
        <begin position="16"/>
        <end position="57"/>
    </location>
</feature>
<feature type="zinc finger region" description="B box-type" evidence="3">
    <location>
        <begin position="84"/>
        <end position="125"/>
    </location>
</feature>
<feature type="coiled-coil region" evidence="2">
    <location>
        <begin position="127"/>
        <end position="169"/>
    </location>
</feature>
<feature type="coiled-coil region" evidence="2">
    <location>
        <begin position="203"/>
        <end position="236"/>
    </location>
</feature>
<feature type="binding site" evidence="3">
    <location>
        <position position="89"/>
    </location>
    <ligand>
        <name>Zn(2+)</name>
        <dbReference type="ChEBI" id="CHEBI:29105"/>
    </ligand>
</feature>
<feature type="binding site" evidence="3">
    <location>
        <position position="92"/>
    </location>
    <ligand>
        <name>Zn(2+)</name>
        <dbReference type="ChEBI" id="CHEBI:29105"/>
    </ligand>
</feature>
<feature type="binding site" evidence="3">
    <location>
        <position position="111"/>
    </location>
    <ligand>
        <name>Zn(2+)</name>
        <dbReference type="ChEBI" id="CHEBI:29105"/>
    </ligand>
</feature>
<feature type="binding site" evidence="3">
    <location>
        <position position="117"/>
    </location>
    <ligand>
        <name>Zn(2+)</name>
        <dbReference type="ChEBI" id="CHEBI:29105"/>
    </ligand>
</feature>
<feature type="modified residue" description="N6-acetyllysine" evidence="8">
    <location>
        <position position="372"/>
    </location>
</feature>
<feature type="mutagenesis site" description="Complete loss of acetylation." evidence="8">
    <original>K</original>
    <variation>R</variation>
    <location>
        <position position="372"/>
    </location>
</feature>
<gene>
    <name type="primary">Trim50</name>
</gene>
<organism>
    <name type="scientific">Mus musculus</name>
    <name type="common">Mouse</name>
    <dbReference type="NCBI Taxonomy" id="10090"/>
    <lineage>
        <taxon>Eukaryota</taxon>
        <taxon>Metazoa</taxon>
        <taxon>Chordata</taxon>
        <taxon>Craniata</taxon>
        <taxon>Vertebrata</taxon>
        <taxon>Euteleostomi</taxon>
        <taxon>Mammalia</taxon>
        <taxon>Eutheria</taxon>
        <taxon>Euarchontoglires</taxon>
        <taxon>Glires</taxon>
        <taxon>Rodentia</taxon>
        <taxon>Myomorpha</taxon>
        <taxon>Muroidea</taxon>
        <taxon>Muridae</taxon>
        <taxon>Murinae</taxon>
        <taxon>Mus</taxon>
        <taxon>Mus</taxon>
    </lineage>
</organism>
<comment type="function">
    <text evidence="7 9 10">E3 ubiquitin-protein ligase that ubiquitinates Beclin-1/BECN1 in a 'Lys-63'-dependent manner enhancing its binding to ULK1 (PubMed:29604308). In turn, promotes starvation-induced autophagy activation. Also interacts with p62/SQSTM1 protein and thereby induces the formation and the autophagy clearance of aggresome-associated polyubiquitinated proteins through HDAC6 interaction (PubMed:22792322). Also promotes NLRP3 inflammasome activation by directly inducing NLRP3 oligomerization independent of its E3 ligase function (PubMed:36178239).</text>
</comment>
<comment type="catalytic activity">
    <reaction evidence="9">
        <text>S-ubiquitinyl-[E2 ubiquitin-conjugating enzyme]-L-cysteine + [acceptor protein]-L-lysine = [E2 ubiquitin-conjugating enzyme]-L-cysteine + N(6)-ubiquitinyl-[acceptor protein]-L-lysine.</text>
        <dbReference type="EC" id="2.3.2.27"/>
    </reaction>
</comment>
<comment type="subunit">
    <text evidence="1 7 9 10">Can form dimers and trimers. Interacts with several E2 ubiquitin-conjugating enzymes, including UBE2L6, UBE2E1, UBE2E3. No interaction with UBE2H. Interacts with BECN1. Interacts with SQSTM1. Interacts with NLRP3 (PubMed:36178239).</text>
</comment>
<comment type="subcellular location">
    <subcellularLocation>
        <location evidence="7 8 9 10">Cytoplasm</location>
    </subcellularLocation>
    <text evidence="7">Localizes mainly into discrete cytoplasmic punctuate structures heterogeneous in size and shape containing polyubiquitinated proteins.</text>
</comment>
<comment type="tissue specificity">
    <text evidence="6">Expressed in the stomach.</text>
</comment>
<comment type="PTM">
    <text evidence="1">Auto-ubiquitinated.</text>
</comment>
<comment type="PTM">
    <text evidence="8">Acetylated by EP300 and KAT2B. HDAC6 drives TRIM50 deacetylation. Acetylation antagonizes with TRIM50 ubiquitination.</text>
</comment>
<comment type="disruption phenotype">
    <text evidence="10">TRIM50-deficient mice show a significantly prolonged survival time when LPS-challenged when compared with wild-type mice. TRIM50 deficiency also significantly ameliorates NLRP3-mediated inflammation and tissue damage in vivo.</text>
</comment>
<comment type="similarity">
    <text evidence="11">Belongs to the TRIM/RBCC family.</text>
</comment>
<evidence type="ECO:0000250" key="1">
    <source>
        <dbReference type="UniProtKB" id="Q86XT4"/>
    </source>
</evidence>
<evidence type="ECO:0000255" key="2"/>
<evidence type="ECO:0000255" key="3">
    <source>
        <dbReference type="PROSITE-ProRule" id="PRU00024"/>
    </source>
</evidence>
<evidence type="ECO:0000255" key="4">
    <source>
        <dbReference type="PROSITE-ProRule" id="PRU00175"/>
    </source>
</evidence>
<evidence type="ECO:0000255" key="5">
    <source>
        <dbReference type="PROSITE-ProRule" id="PRU00548"/>
    </source>
</evidence>
<evidence type="ECO:0000269" key="6">
    <source>
    </source>
</evidence>
<evidence type="ECO:0000269" key="7">
    <source>
    </source>
</evidence>
<evidence type="ECO:0000269" key="8">
    <source>
    </source>
</evidence>
<evidence type="ECO:0000269" key="9">
    <source>
    </source>
</evidence>
<evidence type="ECO:0000269" key="10">
    <source>
    </source>
</evidence>
<evidence type="ECO:0000305" key="11"/>
<reference key="1">
    <citation type="journal article" date="2008" name="Eur. J. Hum. Genet.">
        <title>Williams-Beuren syndrome TRIM50 encodes an E3 ubiquitin ligase.</title>
        <authorList>
            <person name="Micale L."/>
            <person name="Fusco C."/>
            <person name="Augello B."/>
            <person name="Napolitano L.M.R."/>
            <person name="Dermitzakis E.T."/>
            <person name="Meroni G."/>
            <person name="Merla G."/>
            <person name="Reymond A."/>
        </authorList>
    </citation>
    <scope>NUCLEOTIDE SEQUENCE [MRNA]</scope>
    <scope>TISSUE SPECIFICITY</scope>
</reference>
<reference key="2">
    <citation type="journal article" date="2012" name="PLoS ONE">
        <title>The E3-ubiquitin ligase TRIM50 interacts with HDAC6 and p62, and promotes the sequestration and clearance of ubiquitinated proteins into the aggresome.</title>
        <authorList>
            <person name="Fusco C."/>
            <person name="Micale L."/>
            <person name="Egorov M."/>
            <person name="Monti M."/>
            <person name="D'Addetta E.V."/>
            <person name="Augello B."/>
            <person name="Cozzolino F."/>
            <person name="Calcagni A."/>
            <person name="Fontana A."/>
            <person name="Polishchuk R.S."/>
            <person name="Didelot G."/>
            <person name="Reymond A."/>
            <person name="Pucci P."/>
            <person name="Merla G."/>
        </authorList>
    </citation>
    <scope>FUNCTION</scope>
    <scope>INTERACTION WITH SQSTM1</scope>
    <scope>SUBCELLULAR LOCATION</scope>
</reference>
<reference key="3">
    <citation type="journal article" date="2014" name="Cell. Signal.">
        <title>HDAC6 mediates the acetylation of TRIM50.</title>
        <authorList>
            <person name="Fusco C."/>
            <person name="Micale L."/>
            <person name="Augello B."/>
            <person name="Mandriani B."/>
            <person name="Pellico M.T."/>
            <person name="De Nittis P."/>
            <person name="Calcagni A."/>
            <person name="Monti M."/>
            <person name="Cozzolino F."/>
            <person name="Pucci P."/>
            <person name="Merla G."/>
        </authorList>
    </citation>
    <scope>SUBCELLULAR LOCATION</scope>
    <scope>ACETYLATION AT LYS-372</scope>
    <scope>MUTAGENESIS OF LYS-372</scope>
</reference>
<reference key="4">
    <citation type="journal article" date="2018" name="Biochim. Biophys. Acta">
        <title>TRIM50 regulates Beclin 1 proautophagic activity.</title>
        <authorList>
            <person name="Fusco C."/>
            <person name="Mandriani B."/>
            <person name="Di Rienzo M."/>
            <person name="Micale L."/>
            <person name="Malerba N."/>
            <person name="Cocciadiferro D."/>
            <person name="Sjoettem E."/>
            <person name="Augello B."/>
            <person name="Squeo G.M."/>
            <person name="Pellico M.T."/>
            <person name="Jain A."/>
            <person name="Johansen T."/>
            <person name="Fimia G.M."/>
            <person name="Merla G."/>
        </authorList>
    </citation>
    <scope>FUNCTION</scope>
    <scope>SUBCELLULAR LOCATION</scope>
    <scope>INTERACTION WITH BECN1</scope>
    <scope>CATALYTIC ACTIVITY</scope>
</reference>
<reference key="5">
    <citation type="journal article" date="2022" name="EMBO Rep.">
        <title>TRIM50 promotes NLRP3 inflammasome activation by directly inducing NLRP3 oligomerization.</title>
        <authorList>
            <person name="Lin Y."/>
            <person name="Lv X."/>
            <person name="Sun C."/>
            <person name="Sun Y."/>
            <person name="Yang M."/>
            <person name="Ma D."/>
            <person name="Jing W."/>
            <person name="Zhao Y."/>
            <person name="Cheng Y."/>
            <person name="Xuan H."/>
            <person name="Han L."/>
        </authorList>
    </citation>
    <scope>FUNCTION</scope>
    <scope>SUBCELLULAR LOCATION</scope>
    <scope>INTERACTION WITH NLRP3</scope>
    <scope>DISRUPTION PHENOTYPE</scope>
</reference>